<comment type="function">
    <text evidence="1">Involved in protein export. Acts as a chaperone by maintaining the newly synthesized protein in an open conformation. Functions as a peptidyl-prolyl cis-trans isomerase.</text>
</comment>
<comment type="catalytic activity">
    <reaction evidence="1">
        <text>[protein]-peptidylproline (omega=180) = [protein]-peptidylproline (omega=0)</text>
        <dbReference type="Rhea" id="RHEA:16237"/>
        <dbReference type="Rhea" id="RHEA-COMP:10747"/>
        <dbReference type="Rhea" id="RHEA-COMP:10748"/>
        <dbReference type="ChEBI" id="CHEBI:83833"/>
        <dbReference type="ChEBI" id="CHEBI:83834"/>
        <dbReference type="EC" id="5.2.1.8"/>
    </reaction>
</comment>
<comment type="subcellular location">
    <subcellularLocation>
        <location>Cytoplasm</location>
    </subcellularLocation>
    <text evidence="1">About half TF is bound to the ribosome near the polypeptide exit tunnel while the other half is free in the cytoplasm.</text>
</comment>
<comment type="domain">
    <text evidence="1">Consists of 3 domains; the N-terminus binds the ribosome, the middle domain has PPIase activity, while the C-terminus has intrinsic chaperone activity on its own.</text>
</comment>
<comment type="similarity">
    <text evidence="1">Belongs to the FKBP-type PPIase family. Tig subfamily.</text>
</comment>
<feature type="chain" id="PRO_1000115603" description="Trigger factor">
    <location>
        <begin position="1"/>
        <end position="431"/>
    </location>
</feature>
<feature type="domain" description="PPIase FKBP-type" evidence="1">
    <location>
        <begin position="158"/>
        <end position="243"/>
    </location>
</feature>
<protein>
    <recommendedName>
        <fullName evidence="1">Trigger factor</fullName>
        <shortName evidence="1">TF</shortName>
        <ecNumber evidence="1">5.2.1.8</ecNumber>
    </recommendedName>
    <alternativeName>
        <fullName evidence="1">PPIase</fullName>
    </alternativeName>
</protein>
<name>TIG_XYLF2</name>
<proteinExistence type="inferred from homology"/>
<evidence type="ECO:0000255" key="1">
    <source>
        <dbReference type="HAMAP-Rule" id="MF_00303"/>
    </source>
</evidence>
<sequence>MPVLIESIGNLERRLTFSVPEDRLESHVDERLREIARAARINGFRAGKVPAKVIEQRFGEKVRAEVLDSLLRETLDSAIRAHSLRLAGAARIDHANEGGLNFVATFEVVPDFGEIDVSKLGVVRRTAKVTDVDIDQMIENLRLQRRTWRVAEHGAQVGYLVALETWSQAGDERLPIEGVEAGSTILGSGVMFEQIERGLEGLSKGDENVLDVTFPDDWRVMQLAGKAVQVHVKVIEVSEPVLLEVNEEFIKSFGVKSGKLEDFRADIRANLERELKGALVSHLRREIGEQLIAAYAHVEMPPRLVEKEARLMLAKQIEQIRLSGRDPTVIPDDAHIGFMDAACKRVLVGLLVGEIAGRNRLRLDPMRVTETLHLIASTYEEPEEVFQMYRNDPKLMEGVQSLVMEEQVIEWIADRAQKTEQVLSFQEAIQQ</sequence>
<dbReference type="EC" id="5.2.1.8" evidence="1"/>
<dbReference type="EMBL" id="CP001011">
    <property type="protein sequence ID" value="ACB91913.1"/>
    <property type="molecule type" value="Genomic_DNA"/>
</dbReference>
<dbReference type="RefSeq" id="WP_004090161.1">
    <property type="nucleotide sequence ID" value="NC_010577.1"/>
</dbReference>
<dbReference type="SMR" id="B2I8K2"/>
<dbReference type="GeneID" id="93904174"/>
<dbReference type="KEGG" id="xfn:XfasM23_0466"/>
<dbReference type="HOGENOM" id="CLU_033058_2_0_6"/>
<dbReference type="Proteomes" id="UP000001698">
    <property type="component" value="Chromosome"/>
</dbReference>
<dbReference type="GO" id="GO:0005737">
    <property type="term" value="C:cytoplasm"/>
    <property type="evidence" value="ECO:0007669"/>
    <property type="project" value="UniProtKB-SubCell"/>
</dbReference>
<dbReference type="GO" id="GO:0003755">
    <property type="term" value="F:peptidyl-prolyl cis-trans isomerase activity"/>
    <property type="evidence" value="ECO:0007669"/>
    <property type="project" value="UniProtKB-UniRule"/>
</dbReference>
<dbReference type="GO" id="GO:0044183">
    <property type="term" value="F:protein folding chaperone"/>
    <property type="evidence" value="ECO:0007669"/>
    <property type="project" value="TreeGrafter"/>
</dbReference>
<dbReference type="GO" id="GO:0043022">
    <property type="term" value="F:ribosome binding"/>
    <property type="evidence" value="ECO:0007669"/>
    <property type="project" value="TreeGrafter"/>
</dbReference>
<dbReference type="GO" id="GO:0051083">
    <property type="term" value="P:'de novo' cotranslational protein folding"/>
    <property type="evidence" value="ECO:0007669"/>
    <property type="project" value="TreeGrafter"/>
</dbReference>
<dbReference type="GO" id="GO:0051301">
    <property type="term" value="P:cell division"/>
    <property type="evidence" value="ECO:0007669"/>
    <property type="project" value="UniProtKB-KW"/>
</dbReference>
<dbReference type="GO" id="GO:0061077">
    <property type="term" value="P:chaperone-mediated protein folding"/>
    <property type="evidence" value="ECO:0007669"/>
    <property type="project" value="TreeGrafter"/>
</dbReference>
<dbReference type="GO" id="GO:0015031">
    <property type="term" value="P:protein transport"/>
    <property type="evidence" value="ECO:0007669"/>
    <property type="project" value="UniProtKB-UniRule"/>
</dbReference>
<dbReference type="GO" id="GO:0043335">
    <property type="term" value="P:protein unfolding"/>
    <property type="evidence" value="ECO:0007669"/>
    <property type="project" value="TreeGrafter"/>
</dbReference>
<dbReference type="Gene3D" id="3.10.50.40">
    <property type="match status" value="1"/>
</dbReference>
<dbReference type="Gene3D" id="3.30.70.1050">
    <property type="entry name" value="Trigger factor ribosome-binding domain"/>
    <property type="match status" value="1"/>
</dbReference>
<dbReference type="Gene3D" id="1.10.3120.10">
    <property type="entry name" value="Trigger factor, C-terminal domain"/>
    <property type="match status" value="1"/>
</dbReference>
<dbReference type="HAMAP" id="MF_00303">
    <property type="entry name" value="Trigger_factor_Tig"/>
    <property type="match status" value="1"/>
</dbReference>
<dbReference type="InterPro" id="IPR046357">
    <property type="entry name" value="PPIase_dom_sf"/>
</dbReference>
<dbReference type="InterPro" id="IPR005215">
    <property type="entry name" value="Trig_fac"/>
</dbReference>
<dbReference type="InterPro" id="IPR008880">
    <property type="entry name" value="Trigger_fac_C"/>
</dbReference>
<dbReference type="InterPro" id="IPR037041">
    <property type="entry name" value="Trigger_fac_C_sf"/>
</dbReference>
<dbReference type="InterPro" id="IPR008881">
    <property type="entry name" value="Trigger_fac_ribosome-bd_bac"/>
</dbReference>
<dbReference type="InterPro" id="IPR036611">
    <property type="entry name" value="Trigger_fac_ribosome-bd_sf"/>
</dbReference>
<dbReference type="InterPro" id="IPR027304">
    <property type="entry name" value="Trigger_fact/SurA_dom_sf"/>
</dbReference>
<dbReference type="NCBIfam" id="TIGR00115">
    <property type="entry name" value="tig"/>
    <property type="match status" value="1"/>
</dbReference>
<dbReference type="PANTHER" id="PTHR30560">
    <property type="entry name" value="TRIGGER FACTOR CHAPERONE AND PEPTIDYL-PROLYL CIS/TRANS ISOMERASE"/>
    <property type="match status" value="1"/>
</dbReference>
<dbReference type="PANTHER" id="PTHR30560:SF3">
    <property type="entry name" value="TRIGGER FACTOR-LIKE PROTEIN TIG, CHLOROPLASTIC"/>
    <property type="match status" value="1"/>
</dbReference>
<dbReference type="Pfam" id="PF05698">
    <property type="entry name" value="Trigger_C"/>
    <property type="match status" value="1"/>
</dbReference>
<dbReference type="Pfam" id="PF05697">
    <property type="entry name" value="Trigger_N"/>
    <property type="match status" value="1"/>
</dbReference>
<dbReference type="PIRSF" id="PIRSF003095">
    <property type="entry name" value="Trigger_factor"/>
    <property type="match status" value="1"/>
</dbReference>
<dbReference type="SUPFAM" id="SSF54534">
    <property type="entry name" value="FKBP-like"/>
    <property type="match status" value="1"/>
</dbReference>
<dbReference type="SUPFAM" id="SSF109998">
    <property type="entry name" value="Triger factor/SurA peptide-binding domain-like"/>
    <property type="match status" value="1"/>
</dbReference>
<dbReference type="SUPFAM" id="SSF102735">
    <property type="entry name" value="Trigger factor ribosome-binding domain"/>
    <property type="match status" value="1"/>
</dbReference>
<reference key="1">
    <citation type="journal article" date="2010" name="J. Bacteriol.">
        <title>Whole genome sequences of two Xylella fastidiosa strains (M12 and M23) causing almond leaf scorch disease in California.</title>
        <authorList>
            <person name="Chen J."/>
            <person name="Xie G."/>
            <person name="Han S."/>
            <person name="Chertkov O."/>
            <person name="Sims D."/>
            <person name="Civerolo E.L."/>
        </authorList>
    </citation>
    <scope>NUCLEOTIDE SEQUENCE [LARGE SCALE GENOMIC DNA]</scope>
    <source>
        <strain>M23</strain>
    </source>
</reference>
<accession>B2I8K2</accession>
<gene>
    <name evidence="1" type="primary">tig</name>
    <name type="ordered locus">XfasM23_0466</name>
</gene>
<keyword id="KW-0131">Cell cycle</keyword>
<keyword id="KW-0132">Cell division</keyword>
<keyword id="KW-0143">Chaperone</keyword>
<keyword id="KW-0963">Cytoplasm</keyword>
<keyword id="KW-0413">Isomerase</keyword>
<keyword id="KW-0697">Rotamase</keyword>
<organism>
    <name type="scientific">Xylella fastidiosa (strain M23)</name>
    <dbReference type="NCBI Taxonomy" id="405441"/>
    <lineage>
        <taxon>Bacteria</taxon>
        <taxon>Pseudomonadati</taxon>
        <taxon>Pseudomonadota</taxon>
        <taxon>Gammaproteobacteria</taxon>
        <taxon>Lysobacterales</taxon>
        <taxon>Lysobacteraceae</taxon>
        <taxon>Xylella</taxon>
    </lineage>
</organism>